<comment type="function">
    <text evidence="1">This protein binds to the 23S rRNA, and is important in its secondary structure. It is located near the subunit interface in the base of the L7/L12 stalk, and near the tRNA binding site of the peptidyltransferase center.</text>
</comment>
<comment type="subunit">
    <text evidence="1">Part of the 50S ribosomal subunit.</text>
</comment>
<comment type="similarity">
    <text evidence="1">Belongs to the universal ribosomal protein uL6 family.</text>
</comment>
<dbReference type="EMBL" id="X16720">
    <property type="protein sequence ID" value="CAA34696.1"/>
    <property type="molecule type" value="Genomic_DNA"/>
</dbReference>
<dbReference type="PIR" id="S05620">
    <property type="entry name" value="R5MX6"/>
</dbReference>
<dbReference type="SMR" id="P14030"/>
<dbReference type="OMA" id="YAHFPMK"/>
<dbReference type="GO" id="GO:0022625">
    <property type="term" value="C:cytosolic large ribosomal subunit"/>
    <property type="evidence" value="ECO:0007669"/>
    <property type="project" value="TreeGrafter"/>
</dbReference>
<dbReference type="GO" id="GO:0019843">
    <property type="term" value="F:rRNA binding"/>
    <property type="evidence" value="ECO:0007669"/>
    <property type="project" value="UniProtKB-UniRule"/>
</dbReference>
<dbReference type="GO" id="GO:0003735">
    <property type="term" value="F:structural constituent of ribosome"/>
    <property type="evidence" value="ECO:0007669"/>
    <property type="project" value="InterPro"/>
</dbReference>
<dbReference type="GO" id="GO:0002181">
    <property type="term" value="P:cytoplasmic translation"/>
    <property type="evidence" value="ECO:0007669"/>
    <property type="project" value="TreeGrafter"/>
</dbReference>
<dbReference type="FunFam" id="3.90.930.12:FF:000008">
    <property type="entry name" value="50S ribosomal protein L6"/>
    <property type="match status" value="1"/>
</dbReference>
<dbReference type="Gene3D" id="3.90.930.12">
    <property type="entry name" value="Ribosomal protein L6, alpha-beta domain"/>
    <property type="match status" value="2"/>
</dbReference>
<dbReference type="HAMAP" id="MF_01365_A">
    <property type="entry name" value="Ribosomal_uL6_A"/>
    <property type="match status" value="1"/>
</dbReference>
<dbReference type="InterPro" id="IPR000702">
    <property type="entry name" value="Ribosomal_uL6-like"/>
</dbReference>
<dbReference type="InterPro" id="IPR036789">
    <property type="entry name" value="Ribosomal_uL6-like_a/b-dom_sf"/>
</dbReference>
<dbReference type="InterPro" id="IPR020040">
    <property type="entry name" value="Ribosomal_uL6_a/b-dom"/>
</dbReference>
<dbReference type="InterPro" id="IPR019907">
    <property type="entry name" value="Ribosomal_uL6_arc"/>
</dbReference>
<dbReference type="InterPro" id="IPR002359">
    <property type="entry name" value="Ribosomal_uL6_CS2"/>
</dbReference>
<dbReference type="NCBIfam" id="NF004037">
    <property type="entry name" value="PRK05518.1"/>
    <property type="match status" value="1"/>
</dbReference>
<dbReference type="NCBIfam" id="TIGR03653">
    <property type="entry name" value="uL6_arch"/>
    <property type="match status" value="1"/>
</dbReference>
<dbReference type="PANTHER" id="PTHR11655:SF16">
    <property type="entry name" value="60S RIBOSOMAL PROTEIN L9"/>
    <property type="match status" value="1"/>
</dbReference>
<dbReference type="PANTHER" id="PTHR11655">
    <property type="entry name" value="60S/50S RIBOSOMAL PROTEIN L6/L9"/>
    <property type="match status" value="1"/>
</dbReference>
<dbReference type="Pfam" id="PF00347">
    <property type="entry name" value="Ribosomal_L6"/>
    <property type="match status" value="2"/>
</dbReference>
<dbReference type="PIRSF" id="PIRSF002162">
    <property type="entry name" value="Ribosomal_L6"/>
    <property type="match status" value="1"/>
</dbReference>
<dbReference type="SUPFAM" id="SSF56053">
    <property type="entry name" value="Ribosomal protein L6"/>
    <property type="match status" value="2"/>
</dbReference>
<dbReference type="PROSITE" id="PS00700">
    <property type="entry name" value="RIBOSOMAL_L6_2"/>
    <property type="match status" value="1"/>
</dbReference>
<name>RL6_METVA</name>
<gene>
    <name evidence="1" type="primary">rpl6</name>
</gene>
<evidence type="ECO:0000255" key="1">
    <source>
        <dbReference type="HAMAP-Rule" id="MF_01365"/>
    </source>
</evidence>
<evidence type="ECO:0000305" key="2"/>
<keyword id="KW-0687">Ribonucleoprotein</keyword>
<keyword id="KW-0689">Ribosomal protein</keyword>
<keyword id="KW-0694">RNA-binding</keyword>
<keyword id="KW-0699">rRNA-binding</keyword>
<accession>P14030</accession>
<sequence length="182" mass="20134">MPVAALIREEIEIPGNVSVEVNGSEVVVKSGAKVLKRELAFPGIEIKMENEKVVVESTFPKKNQTAMVGTYRSHIQNMIKGVSEGFEYKLVIRYAHFPMKVTFKGNTVIIDNFLGEKYPRTAKVMEGVTVKVNGEEVIVSGTNKEFVGQTAANIEQATKVKGRDTRIFQDGIYIVEKAGKVL</sequence>
<protein>
    <recommendedName>
        <fullName evidence="1">Large ribosomal subunit protein uL6</fullName>
    </recommendedName>
    <alternativeName>
        <fullName evidence="2">50S ribosomal protein L6</fullName>
    </alternativeName>
</protein>
<proteinExistence type="inferred from homology"/>
<feature type="chain" id="PRO_0000131086" description="Large ribosomal subunit protein uL6">
    <location>
        <begin position="1"/>
        <end position="182"/>
    </location>
</feature>
<reference key="1">
    <citation type="journal article" date="1989" name="J. Mol. Biol.">
        <title>Organization and structure of the Methanococcus transcriptional unit homologous to the Escherichia coli 'spectinomycin operon'. Implications for the evolutionary relationship of 70 S and 80 S ribosomes.</title>
        <authorList>
            <person name="Auer J."/>
            <person name="Spicker G."/>
            <person name="Boeck A."/>
        </authorList>
    </citation>
    <scope>NUCLEOTIDE SEQUENCE [GENOMIC DNA]</scope>
</reference>
<organism>
    <name type="scientific">Methanococcus vannielii</name>
    <dbReference type="NCBI Taxonomy" id="2187"/>
    <lineage>
        <taxon>Archaea</taxon>
        <taxon>Methanobacteriati</taxon>
        <taxon>Methanobacteriota</taxon>
        <taxon>Methanomada group</taxon>
        <taxon>Methanococci</taxon>
        <taxon>Methanococcales</taxon>
        <taxon>Methanococcaceae</taxon>
        <taxon>Methanococcus</taxon>
    </lineage>
</organism>